<sequence>MGTHGATKSATSAVPTPRSNSMAMVRLAIGLLGVCAVVAAFGLVSGARRYAEAGNPYPGAFVSVAEPVGFFAASLAGALCLGALIHVVMTAKPEPDGLIDAAAFRIHLLAERVSGLWLGLAATMVVIQAAHDTGVGPARLLASGALSDSVAASEMARGWIVAAICALVVATALRLYTRWLGHVVLLVPTVLAVVATAVTGNPGQGPDHDYATSAAIVFAVAFATLTGLKIAAALAGTTPSRAVLVTQVTCGALALAYGAMLLYLFIPGWAVDSDFARLGLLAGVILTSVWLFDCWRLLVRPPHAGRRRGGGSGAALAMMAAMASIAAMAVMTAPRFLTHAFTAWDVFLGYELPQPPTIARVLTVWRFDSLIGAAGVVLAIGYAAGFAALRRRGNSWPVGRLIAWLTGCAALVFTSGSGVRAYGSAMFSVHMAEHMTLNMFIPVLLVLGGPVTLALRVLPVTGDGRPPGAREWLTWLLHSRVTTFLSHPITAFVLFVASPYIVYFTPLFDTFVRYHWGHEFMAIHFLVVGYLFYWAIIGIDPGPRRLPYPGRIGLLFAVMPFHAFFGIALMTMSSTVGATFYRSVNLPWLSSIIADQHLGGGIAWSLTELPVIMVIVALVTQWARQDRRVASREDRHADSDYADDELEAYNAMLRELSRMRR</sequence>
<protein>
    <recommendedName>
        <fullName>Uncharacterized protein Mb0105</fullName>
    </recommendedName>
</protein>
<feature type="chain" id="PRO_0000103673" description="Uncharacterized protein Mb0105">
    <location>
        <begin position="1"/>
        <end position="661"/>
    </location>
</feature>
<feature type="transmembrane region" description="Helical" evidence="1">
    <location>
        <begin position="27"/>
        <end position="47"/>
    </location>
</feature>
<feature type="transmembrane region" description="Helical" evidence="1">
    <location>
        <begin position="68"/>
        <end position="88"/>
    </location>
</feature>
<feature type="transmembrane region" description="Helical" evidence="1">
    <location>
        <begin position="116"/>
        <end position="136"/>
    </location>
</feature>
<feature type="transmembrane region" description="Helical" evidence="1">
    <location>
        <begin position="150"/>
        <end position="170"/>
    </location>
</feature>
<feature type="transmembrane region" description="Helical" evidence="1">
    <location>
        <begin position="179"/>
        <end position="199"/>
    </location>
</feature>
<feature type="transmembrane region" description="Helical" evidence="1">
    <location>
        <begin position="214"/>
        <end position="234"/>
    </location>
</feature>
<feature type="transmembrane region" description="Helical" evidence="1">
    <location>
        <begin position="251"/>
        <end position="271"/>
    </location>
</feature>
<feature type="transmembrane region" description="Helical" evidence="1">
    <location>
        <begin position="279"/>
        <end position="299"/>
    </location>
</feature>
<feature type="transmembrane region" description="Helical" evidence="1">
    <location>
        <begin position="313"/>
        <end position="333"/>
    </location>
</feature>
<feature type="transmembrane region" description="Helical" evidence="1">
    <location>
        <begin position="369"/>
        <end position="389"/>
    </location>
</feature>
<feature type="transmembrane region" description="Helical" evidence="1">
    <location>
        <begin position="396"/>
        <end position="416"/>
    </location>
</feature>
<feature type="transmembrane region" description="Helical" evidence="1">
    <location>
        <begin position="435"/>
        <end position="455"/>
    </location>
</feature>
<feature type="transmembrane region" description="Helical" evidence="1">
    <location>
        <begin position="488"/>
        <end position="508"/>
    </location>
</feature>
<feature type="transmembrane region" description="Helical" evidence="1">
    <location>
        <begin position="519"/>
        <end position="539"/>
    </location>
</feature>
<feature type="transmembrane region" description="Helical" evidence="1">
    <location>
        <begin position="552"/>
        <end position="572"/>
    </location>
</feature>
<feature type="transmembrane region" description="Helical" evidence="1">
    <location>
        <begin position="599"/>
        <end position="619"/>
    </location>
</feature>
<gene>
    <name type="ordered locus">BQ2027_MB0105</name>
</gene>
<reference key="1">
    <citation type="journal article" date="2003" name="Proc. Natl. Acad. Sci. U.S.A.">
        <title>The complete genome sequence of Mycobacterium bovis.</title>
        <authorList>
            <person name="Garnier T."/>
            <person name="Eiglmeier K."/>
            <person name="Camus J.-C."/>
            <person name="Medina N."/>
            <person name="Mansoor H."/>
            <person name="Pryor M."/>
            <person name="Duthoy S."/>
            <person name="Grondin S."/>
            <person name="Lacroix C."/>
            <person name="Monsempe C."/>
            <person name="Simon S."/>
            <person name="Harris B."/>
            <person name="Atkin R."/>
            <person name="Doggett J."/>
            <person name="Mayes R."/>
            <person name="Keating L."/>
            <person name="Wheeler P.R."/>
            <person name="Parkhill J."/>
            <person name="Barrell B.G."/>
            <person name="Cole S.T."/>
            <person name="Gordon S.V."/>
            <person name="Hewinson R.G."/>
        </authorList>
    </citation>
    <scope>NUCLEOTIDE SEQUENCE [LARGE SCALE GENOMIC DNA]</scope>
    <source>
        <strain>ATCC BAA-935 / AF2122/97</strain>
    </source>
</reference>
<reference key="2">
    <citation type="journal article" date="2017" name="Genome Announc.">
        <title>Updated reference genome sequence and annotation of Mycobacterium bovis AF2122/97.</title>
        <authorList>
            <person name="Malone K.M."/>
            <person name="Farrell D."/>
            <person name="Stuber T.P."/>
            <person name="Schubert O.T."/>
            <person name="Aebersold R."/>
            <person name="Robbe-Austerman S."/>
            <person name="Gordon S.V."/>
        </authorList>
    </citation>
    <scope>NUCLEOTIDE SEQUENCE [LARGE SCALE GENOMIC DNA]</scope>
    <scope>GENOME REANNOTATION</scope>
    <source>
        <strain>ATCC BAA-935 / AF2122/97</strain>
    </source>
</reference>
<comment type="subcellular location">
    <subcellularLocation>
        <location evidence="2">Cell membrane</location>
        <topology evidence="2">Multi-pass membrane protein</topology>
    </subcellularLocation>
</comment>
<comment type="similarity">
    <text evidence="2">To M.leprae ML1998.</text>
</comment>
<organism>
    <name type="scientific">Mycobacterium bovis (strain ATCC BAA-935 / AF2122/97)</name>
    <dbReference type="NCBI Taxonomy" id="233413"/>
    <lineage>
        <taxon>Bacteria</taxon>
        <taxon>Bacillati</taxon>
        <taxon>Actinomycetota</taxon>
        <taxon>Actinomycetes</taxon>
        <taxon>Mycobacteriales</taxon>
        <taxon>Mycobacteriaceae</taxon>
        <taxon>Mycobacterium</taxon>
        <taxon>Mycobacterium tuberculosis complex</taxon>
    </lineage>
</organism>
<name>Y105_MYCBO</name>
<proteinExistence type="predicted"/>
<keyword id="KW-1003">Cell membrane</keyword>
<keyword id="KW-0472">Membrane</keyword>
<keyword id="KW-1185">Reference proteome</keyword>
<keyword id="KW-0812">Transmembrane</keyword>
<keyword id="KW-1133">Transmembrane helix</keyword>
<accession>P64690</accession>
<accession>A0A1R3XUC4</accession>
<accession>Q10897</accession>
<accession>X2BE16</accession>
<evidence type="ECO:0000255" key="1"/>
<evidence type="ECO:0000305" key="2"/>
<dbReference type="EMBL" id="LT708304">
    <property type="protein sequence ID" value="SIT98512.1"/>
    <property type="molecule type" value="Genomic_DNA"/>
</dbReference>
<dbReference type="RefSeq" id="NP_853773.1">
    <property type="nucleotide sequence ID" value="NC_002945.3"/>
</dbReference>
<dbReference type="RefSeq" id="WP_003900808.1">
    <property type="nucleotide sequence ID" value="NC_002945.4"/>
</dbReference>
<dbReference type="PATRIC" id="fig|233413.5.peg.117"/>
<dbReference type="Proteomes" id="UP000001419">
    <property type="component" value="Chromosome"/>
</dbReference>
<dbReference type="GO" id="GO:0005886">
    <property type="term" value="C:plasma membrane"/>
    <property type="evidence" value="ECO:0007669"/>
    <property type="project" value="UniProtKB-SubCell"/>
</dbReference>
<dbReference type="InterPro" id="IPR019108">
    <property type="entry name" value="Caa3_assmbl_CtaG-rel"/>
</dbReference>
<dbReference type="Pfam" id="PF09678">
    <property type="entry name" value="Caa3_CtaG"/>
    <property type="match status" value="1"/>
</dbReference>